<name>ARR7_ARATH</name>
<gene>
    <name type="primary">ARR7</name>
    <name type="ordered locus">At1g19050</name>
    <name type="ORF">F14D16.20</name>
</gene>
<feature type="chain" id="PRO_0000081428" description="Two-component response regulator ARR7">
    <location>
        <begin position="1"/>
        <end position="206"/>
    </location>
</feature>
<feature type="domain" description="Response regulatory" evidence="1">
    <location>
        <begin position="25"/>
        <end position="152"/>
    </location>
</feature>
<feature type="region of interest" description="Disordered" evidence="2">
    <location>
        <begin position="165"/>
        <end position="206"/>
    </location>
</feature>
<feature type="modified residue" description="4-aspartylphosphate" evidence="1">
    <location>
        <position position="85"/>
    </location>
</feature>
<sequence length="206" mass="22800">MAVGEVMRMEIPAGGDLTVTTPELHVLAVDDSIVDRKVIERLLRISSCKVTTVESGTRALQYLGLDGGKGASNLKDLKVNLIVTDYSMPGLSGYDLLKKIKESSAFREVPVVIMSSENILPRIQECLKEGAEEFLLKPVKLADVKRIKQLIMRNEAEECKILSHSNKRKLQEDSDTSSSSHDDTSIKDSSCSKRMKSESENLFSLL</sequence>
<proteinExistence type="evidence at protein level"/>
<protein>
    <recommendedName>
        <fullName>Two-component response regulator ARR7</fullName>
    </recommendedName>
</protein>
<evidence type="ECO:0000255" key="1">
    <source>
        <dbReference type="PROSITE-ProRule" id="PRU00169"/>
    </source>
</evidence>
<evidence type="ECO:0000256" key="2">
    <source>
        <dbReference type="SAM" id="MobiDB-lite"/>
    </source>
</evidence>
<evidence type="ECO:0000269" key="3">
    <source>
    </source>
</evidence>
<evidence type="ECO:0000269" key="4">
    <source>
    </source>
</evidence>
<evidence type="ECO:0000269" key="5">
    <source>
    </source>
</evidence>
<evidence type="ECO:0000269" key="6">
    <source>
    </source>
</evidence>
<evidence type="ECO:0000305" key="7"/>
<comment type="function">
    <text evidence="4 5">Functions as a response regulator involved in His-to-Asp phosphorelay signal transduction system. Phosphorylation of the Asp residue in the receiver domain activates the ability of the protein to promote the transcription of target genes. Type-A response regulators seem to act as negative regulators of the cytokinin signaling.</text>
</comment>
<comment type="interaction">
    <interactant intactId="EBI-1100917">
        <id>Q9ZWS7</id>
    </interactant>
    <interactant intactId="EBI-1100687">
        <id>Q9ZNV8</id>
        <label>AHP2</label>
    </interactant>
    <organismsDiffer>false</organismsDiffer>
    <experiments>6</experiments>
</comment>
<comment type="interaction">
    <interactant intactId="EBI-1100917">
        <id>Q9ZWS7</id>
    </interactant>
    <interactant intactId="EBI-1100711">
        <id>Q9SAZ5</id>
        <label>AHP3</label>
    </interactant>
    <organismsDiffer>false</organismsDiffer>
    <experiments>4</experiments>
</comment>
<comment type="interaction">
    <interactant intactId="EBI-1100917">
        <id>Q9ZWS7</id>
    </interactant>
    <interactant intactId="EBI-1100725">
        <id>Q67XQ1</id>
        <label>At1g03430</label>
    </interactant>
    <organismsDiffer>false</organismsDiffer>
    <experiments>3</experiments>
</comment>
<comment type="interaction">
    <interactant intactId="EBI-1100917">
        <id>Q9ZWS7</id>
    </interactant>
    <interactant intactId="EBI-1807753">
        <id>Q8L831</id>
        <label>NUDT3</label>
    </interactant>
    <organismsDiffer>false</organismsDiffer>
    <experiments>2</experiments>
</comment>
<comment type="subcellular location">
    <subcellularLocation>
        <location evidence="7">Nucleus</location>
    </subcellularLocation>
</comment>
<comment type="tissue specificity">
    <text evidence="3 5">Predominantly expressed in roots and young flowers.</text>
</comment>
<comment type="induction">
    <text evidence="3 6">By cytokinins (BA and zeatin) and nitrate.</text>
</comment>
<comment type="PTM">
    <text>Two-component system major event consists of a His-to-Asp phosphorelay between a sensor histidine kinase (HK) and a response regulator (RR). In plants, the His-to-Asp phosphorelay involves an additional intermediate named Histidine-containing phosphotransfer protein (HPt). This multistep phosphorelay consists of a His-Asp-His-Asp sequential transfer of a phosphate group between first a His and an Asp of the HK protein, followed by the transfer to a conserved His of the HPt protein and finally the transfer to an Asp in the receiver domain of the RR protein.</text>
</comment>
<comment type="similarity">
    <text evidence="7">Belongs to the ARR family. Type-A subfamily.</text>
</comment>
<organism>
    <name type="scientific">Arabidopsis thaliana</name>
    <name type="common">Mouse-ear cress</name>
    <dbReference type="NCBI Taxonomy" id="3702"/>
    <lineage>
        <taxon>Eukaryota</taxon>
        <taxon>Viridiplantae</taxon>
        <taxon>Streptophyta</taxon>
        <taxon>Embryophyta</taxon>
        <taxon>Tracheophyta</taxon>
        <taxon>Spermatophyta</taxon>
        <taxon>Magnoliopsida</taxon>
        <taxon>eudicotyledons</taxon>
        <taxon>Gunneridae</taxon>
        <taxon>Pentapetalae</taxon>
        <taxon>rosids</taxon>
        <taxon>malvids</taxon>
        <taxon>Brassicales</taxon>
        <taxon>Brassicaceae</taxon>
        <taxon>Camelineae</taxon>
        <taxon>Arabidopsis</taxon>
    </lineage>
</organism>
<dbReference type="EMBL" id="AB008490">
    <property type="protein sequence ID" value="BAA34729.1"/>
    <property type="molecule type" value="mRNA"/>
</dbReference>
<dbReference type="EMBL" id="AC068602">
    <property type="protein sequence ID" value="AAF79300.1"/>
    <property type="molecule type" value="Genomic_DNA"/>
</dbReference>
<dbReference type="EMBL" id="CP002684">
    <property type="protein sequence ID" value="AEE29795.1"/>
    <property type="molecule type" value="Genomic_DNA"/>
</dbReference>
<dbReference type="PIR" id="T50854">
    <property type="entry name" value="T50854"/>
</dbReference>
<dbReference type="RefSeq" id="NP_173339.1">
    <property type="nucleotide sequence ID" value="NM_101763.3"/>
</dbReference>
<dbReference type="SMR" id="Q9ZWS7"/>
<dbReference type="BioGRID" id="23726">
    <property type="interactions" value="19"/>
</dbReference>
<dbReference type="FunCoup" id="Q9ZWS7">
    <property type="interactions" value="323"/>
</dbReference>
<dbReference type="IntAct" id="Q9ZWS7">
    <property type="interactions" value="18"/>
</dbReference>
<dbReference type="STRING" id="3702.Q9ZWS7"/>
<dbReference type="iPTMnet" id="Q9ZWS7"/>
<dbReference type="PaxDb" id="3702-AT1G19050.1"/>
<dbReference type="EnsemblPlants" id="AT1G19050.1">
    <property type="protein sequence ID" value="AT1G19050.1"/>
    <property type="gene ID" value="AT1G19050"/>
</dbReference>
<dbReference type="GeneID" id="838487"/>
<dbReference type="Gramene" id="AT1G19050.1">
    <property type="protein sequence ID" value="AT1G19050.1"/>
    <property type="gene ID" value="AT1G19050"/>
</dbReference>
<dbReference type="KEGG" id="ath:AT1G19050"/>
<dbReference type="Araport" id="AT1G19050"/>
<dbReference type="TAIR" id="AT1G19050">
    <property type="gene designation" value="ARR7"/>
</dbReference>
<dbReference type="eggNOG" id="KOG1601">
    <property type="taxonomic scope" value="Eukaryota"/>
</dbReference>
<dbReference type="HOGENOM" id="CLU_000445_69_5_1"/>
<dbReference type="InParanoid" id="Q9ZWS7"/>
<dbReference type="OMA" id="CVINPLR"/>
<dbReference type="OrthoDB" id="60033at2759"/>
<dbReference type="PhylomeDB" id="Q9ZWS7"/>
<dbReference type="PRO" id="PR:Q9ZWS7"/>
<dbReference type="Proteomes" id="UP000006548">
    <property type="component" value="Chromosome 1"/>
</dbReference>
<dbReference type="ExpressionAtlas" id="Q9ZWS7">
    <property type="expression patterns" value="baseline and differential"/>
</dbReference>
<dbReference type="GO" id="GO:0005634">
    <property type="term" value="C:nucleus"/>
    <property type="evidence" value="ECO:0000314"/>
    <property type="project" value="TAIR"/>
</dbReference>
<dbReference type="GO" id="GO:0000156">
    <property type="term" value="F:phosphorelay response regulator activity"/>
    <property type="evidence" value="ECO:0000250"/>
    <property type="project" value="TAIR"/>
</dbReference>
<dbReference type="GO" id="GO:0009736">
    <property type="term" value="P:cytokinin-activated signaling pathway"/>
    <property type="evidence" value="ECO:0000315"/>
    <property type="project" value="TAIR"/>
</dbReference>
<dbReference type="GO" id="GO:0006355">
    <property type="term" value="P:regulation of DNA-templated transcription"/>
    <property type="evidence" value="ECO:0000304"/>
    <property type="project" value="TAIR"/>
</dbReference>
<dbReference type="GO" id="GO:0009735">
    <property type="term" value="P:response to cytokinin"/>
    <property type="evidence" value="ECO:0000270"/>
    <property type="project" value="TAIR"/>
</dbReference>
<dbReference type="GO" id="GO:0019827">
    <property type="term" value="P:stem cell population maintenance"/>
    <property type="evidence" value="ECO:0000315"/>
    <property type="project" value="TAIR"/>
</dbReference>
<dbReference type="CDD" id="cd17581">
    <property type="entry name" value="REC_typeA_ARR"/>
    <property type="match status" value="1"/>
</dbReference>
<dbReference type="FunFam" id="3.40.50.2300:FF:000184">
    <property type="entry name" value="Response regulator 3"/>
    <property type="match status" value="1"/>
</dbReference>
<dbReference type="Gene3D" id="3.40.50.2300">
    <property type="match status" value="1"/>
</dbReference>
<dbReference type="InterPro" id="IPR045279">
    <property type="entry name" value="ARR-like"/>
</dbReference>
<dbReference type="InterPro" id="IPR011006">
    <property type="entry name" value="CheY-like_superfamily"/>
</dbReference>
<dbReference type="InterPro" id="IPR001789">
    <property type="entry name" value="Sig_transdc_resp-reg_receiver"/>
</dbReference>
<dbReference type="PANTHER" id="PTHR43874">
    <property type="entry name" value="TWO-COMPONENT RESPONSE REGULATOR"/>
    <property type="match status" value="1"/>
</dbReference>
<dbReference type="PANTHER" id="PTHR43874:SF122">
    <property type="entry name" value="TWO-COMPONENT RESPONSE REGULATOR ARR7"/>
    <property type="match status" value="1"/>
</dbReference>
<dbReference type="Pfam" id="PF00072">
    <property type="entry name" value="Response_reg"/>
    <property type="match status" value="1"/>
</dbReference>
<dbReference type="SMART" id="SM00448">
    <property type="entry name" value="REC"/>
    <property type="match status" value="1"/>
</dbReference>
<dbReference type="SUPFAM" id="SSF52172">
    <property type="entry name" value="CheY-like"/>
    <property type="match status" value="1"/>
</dbReference>
<dbReference type="PROSITE" id="PS50110">
    <property type="entry name" value="RESPONSE_REGULATORY"/>
    <property type="match status" value="1"/>
</dbReference>
<keyword id="KW-0932">Cytokinin signaling pathway</keyword>
<keyword id="KW-0539">Nucleus</keyword>
<keyword id="KW-0597">Phosphoprotein</keyword>
<keyword id="KW-1185">Reference proteome</keyword>
<keyword id="KW-0804">Transcription</keyword>
<keyword id="KW-0805">Transcription regulation</keyword>
<keyword id="KW-0902">Two-component regulatory system</keyword>
<accession>Q9ZWS7</accession>
<reference key="1">
    <citation type="journal article" date="1998" name="Proc. Natl. Acad. Sci. U.S.A.">
        <title>Response regulators implicated in His-to-Asp phosphotransfer signaling in Arabidopsis.</title>
        <authorList>
            <person name="Imamura A."/>
            <person name="Hanaki N."/>
            <person name="Umeda H."/>
            <person name="Nakamura A."/>
            <person name="Suzuki T."/>
            <person name="Ueguchi C."/>
            <person name="Mizuno T."/>
        </authorList>
    </citation>
    <scope>NUCLEOTIDE SEQUENCE [MRNA]</scope>
    <scope>FUNCTION</scope>
    <scope>TISSUE SPECIFICITY</scope>
    <source>
        <strain>cv. Columbia</strain>
    </source>
</reference>
<reference key="2">
    <citation type="journal article" date="2000" name="Nature">
        <title>Sequence and analysis of chromosome 1 of the plant Arabidopsis thaliana.</title>
        <authorList>
            <person name="Theologis A."/>
            <person name="Ecker J.R."/>
            <person name="Palm C.J."/>
            <person name="Federspiel N.A."/>
            <person name="Kaul S."/>
            <person name="White O."/>
            <person name="Alonso J."/>
            <person name="Altafi H."/>
            <person name="Araujo R."/>
            <person name="Bowman C.L."/>
            <person name="Brooks S.Y."/>
            <person name="Buehler E."/>
            <person name="Chan A."/>
            <person name="Chao Q."/>
            <person name="Chen H."/>
            <person name="Cheuk R.F."/>
            <person name="Chin C.W."/>
            <person name="Chung M.K."/>
            <person name="Conn L."/>
            <person name="Conway A.B."/>
            <person name="Conway A.R."/>
            <person name="Creasy T.H."/>
            <person name="Dewar K."/>
            <person name="Dunn P."/>
            <person name="Etgu P."/>
            <person name="Feldblyum T.V."/>
            <person name="Feng J.-D."/>
            <person name="Fong B."/>
            <person name="Fujii C.Y."/>
            <person name="Gill J.E."/>
            <person name="Goldsmith A.D."/>
            <person name="Haas B."/>
            <person name="Hansen N.F."/>
            <person name="Hughes B."/>
            <person name="Huizar L."/>
            <person name="Hunter J.L."/>
            <person name="Jenkins J."/>
            <person name="Johnson-Hopson C."/>
            <person name="Khan S."/>
            <person name="Khaykin E."/>
            <person name="Kim C.J."/>
            <person name="Koo H.L."/>
            <person name="Kremenetskaia I."/>
            <person name="Kurtz D.B."/>
            <person name="Kwan A."/>
            <person name="Lam B."/>
            <person name="Langin-Hooper S."/>
            <person name="Lee A."/>
            <person name="Lee J.M."/>
            <person name="Lenz C.A."/>
            <person name="Li J.H."/>
            <person name="Li Y.-P."/>
            <person name="Lin X."/>
            <person name="Liu S.X."/>
            <person name="Liu Z.A."/>
            <person name="Luros J.S."/>
            <person name="Maiti R."/>
            <person name="Marziali A."/>
            <person name="Militscher J."/>
            <person name="Miranda M."/>
            <person name="Nguyen M."/>
            <person name="Nierman W.C."/>
            <person name="Osborne B.I."/>
            <person name="Pai G."/>
            <person name="Peterson J."/>
            <person name="Pham P.K."/>
            <person name="Rizzo M."/>
            <person name="Rooney T."/>
            <person name="Rowley D."/>
            <person name="Sakano H."/>
            <person name="Salzberg S.L."/>
            <person name="Schwartz J.R."/>
            <person name="Shinn P."/>
            <person name="Southwick A.M."/>
            <person name="Sun H."/>
            <person name="Tallon L.J."/>
            <person name="Tambunga G."/>
            <person name="Toriumi M.J."/>
            <person name="Town C.D."/>
            <person name="Utterback T."/>
            <person name="Van Aken S."/>
            <person name="Vaysberg M."/>
            <person name="Vysotskaia V.S."/>
            <person name="Walker M."/>
            <person name="Wu D."/>
            <person name="Yu G."/>
            <person name="Fraser C.M."/>
            <person name="Venter J.C."/>
            <person name="Davis R.W."/>
        </authorList>
    </citation>
    <scope>NUCLEOTIDE SEQUENCE [LARGE SCALE GENOMIC DNA]</scope>
    <source>
        <strain>cv. Columbia</strain>
    </source>
</reference>
<reference key="3">
    <citation type="journal article" date="2017" name="Plant J.">
        <title>Araport11: a complete reannotation of the Arabidopsis thaliana reference genome.</title>
        <authorList>
            <person name="Cheng C.Y."/>
            <person name="Krishnakumar V."/>
            <person name="Chan A.P."/>
            <person name="Thibaud-Nissen F."/>
            <person name="Schobel S."/>
            <person name="Town C.D."/>
        </authorList>
    </citation>
    <scope>GENOME REANNOTATION</scope>
    <source>
        <strain>cv. Columbia</strain>
    </source>
</reference>
<reference key="4">
    <citation type="journal article" date="1998" name="FEBS Lett.">
        <title>Expression of Arabidopsis response regulator homologs is induced by cytokinins and nitrate.</title>
        <authorList>
            <person name="Taniguchi M."/>
            <person name="Kiba T."/>
            <person name="Sakakibara H."/>
            <person name="Ueguchi C."/>
            <person name="Mizuno T."/>
            <person name="Sugiyama T."/>
        </authorList>
    </citation>
    <scope>INDUCTION</scope>
</reference>
<reference key="5">
    <citation type="journal article" date="2000" name="Plant Physiol.">
        <title>Characterization of the response of the Arabidopsis response regulator gene family to cytokinin.</title>
        <authorList>
            <person name="D'Agostino I.B."/>
            <person name="Deruere J."/>
            <person name="Kieber J.J."/>
        </authorList>
    </citation>
    <scope>TISSUE SPECIFICITY</scope>
    <scope>INDUCTION</scope>
</reference>
<reference key="6">
    <citation type="journal article" date="2004" name="Plant Cell">
        <title>Type-A Arabidopsis response regulators are partially redundant negative regulators of cytokinin signaling.</title>
        <authorList>
            <person name="To J.P.C."/>
            <person name="Haberer G."/>
            <person name="Ferreira F.J."/>
            <person name="Deruere J."/>
            <person name="Mason M.G."/>
            <person name="Schaller G.E."/>
            <person name="Alonso J.M."/>
            <person name="Ecker J.R."/>
            <person name="Kieber J.J."/>
        </authorList>
    </citation>
    <scope>FUNCTION</scope>
</reference>